<reference key="1">
    <citation type="journal article" date="2009" name="Proc. Natl. Acad. Sci. U.S.A.">
        <title>Biogeography of the Sulfolobus islandicus pan-genome.</title>
        <authorList>
            <person name="Reno M.L."/>
            <person name="Held N.L."/>
            <person name="Fields C.J."/>
            <person name="Burke P.V."/>
            <person name="Whitaker R.J."/>
        </authorList>
    </citation>
    <scope>NUCLEOTIDE SEQUENCE [LARGE SCALE GENOMIC DNA]</scope>
    <source>
        <strain>M.14.25 / Kamchatka #1</strain>
    </source>
</reference>
<name>DNLI_SACI4</name>
<dbReference type="EC" id="6.5.1.1" evidence="1"/>
<dbReference type="EMBL" id="CP001400">
    <property type="protein sequence ID" value="ACP38689.1"/>
    <property type="molecule type" value="Genomic_DNA"/>
</dbReference>
<dbReference type="RefSeq" id="WP_012711916.1">
    <property type="nucleotide sequence ID" value="NC_012588.1"/>
</dbReference>
<dbReference type="SMR" id="C3MYD2"/>
<dbReference type="KEGG" id="sia:M1425_1945"/>
<dbReference type="HOGENOM" id="CLU_005138_6_0_2"/>
<dbReference type="Proteomes" id="UP000001350">
    <property type="component" value="Chromosome"/>
</dbReference>
<dbReference type="GO" id="GO:0005524">
    <property type="term" value="F:ATP binding"/>
    <property type="evidence" value="ECO:0007669"/>
    <property type="project" value="UniProtKB-UniRule"/>
</dbReference>
<dbReference type="GO" id="GO:0003677">
    <property type="term" value="F:DNA binding"/>
    <property type="evidence" value="ECO:0007669"/>
    <property type="project" value="InterPro"/>
</dbReference>
<dbReference type="GO" id="GO:0003910">
    <property type="term" value="F:DNA ligase (ATP) activity"/>
    <property type="evidence" value="ECO:0007669"/>
    <property type="project" value="UniProtKB-UniRule"/>
</dbReference>
<dbReference type="GO" id="GO:0046872">
    <property type="term" value="F:metal ion binding"/>
    <property type="evidence" value="ECO:0007669"/>
    <property type="project" value="UniProtKB-KW"/>
</dbReference>
<dbReference type="GO" id="GO:0051301">
    <property type="term" value="P:cell division"/>
    <property type="evidence" value="ECO:0007669"/>
    <property type="project" value="UniProtKB-KW"/>
</dbReference>
<dbReference type="GO" id="GO:0071897">
    <property type="term" value="P:DNA biosynthetic process"/>
    <property type="evidence" value="ECO:0007669"/>
    <property type="project" value="InterPro"/>
</dbReference>
<dbReference type="GO" id="GO:0006310">
    <property type="term" value="P:DNA recombination"/>
    <property type="evidence" value="ECO:0007669"/>
    <property type="project" value="UniProtKB-UniRule"/>
</dbReference>
<dbReference type="GO" id="GO:0006281">
    <property type="term" value="P:DNA repair"/>
    <property type="evidence" value="ECO:0007669"/>
    <property type="project" value="UniProtKB-UniRule"/>
</dbReference>
<dbReference type="GO" id="GO:0006273">
    <property type="term" value="P:lagging strand elongation"/>
    <property type="evidence" value="ECO:0007669"/>
    <property type="project" value="TreeGrafter"/>
</dbReference>
<dbReference type="CDD" id="cd07901">
    <property type="entry name" value="Adenylation_DNA_ligase_Arch_LigB"/>
    <property type="match status" value="1"/>
</dbReference>
<dbReference type="CDD" id="cd07969">
    <property type="entry name" value="OBF_DNA_ligase_I"/>
    <property type="match status" value="1"/>
</dbReference>
<dbReference type="FunFam" id="1.10.3260.10:FF:000007">
    <property type="entry name" value="DNA ligase"/>
    <property type="match status" value="1"/>
</dbReference>
<dbReference type="FunFam" id="2.40.50.140:FF:000062">
    <property type="entry name" value="DNA ligase"/>
    <property type="match status" value="1"/>
</dbReference>
<dbReference type="FunFam" id="3.30.470.30:FF:000012">
    <property type="entry name" value="Probable DNA ligase"/>
    <property type="match status" value="1"/>
</dbReference>
<dbReference type="Gene3D" id="1.10.3260.10">
    <property type="entry name" value="DNA ligase, ATP-dependent, N-terminal domain"/>
    <property type="match status" value="1"/>
</dbReference>
<dbReference type="Gene3D" id="3.30.470.30">
    <property type="entry name" value="DNA ligase/mRNA capping enzyme"/>
    <property type="match status" value="1"/>
</dbReference>
<dbReference type="Gene3D" id="2.40.50.140">
    <property type="entry name" value="Nucleic acid-binding proteins"/>
    <property type="match status" value="1"/>
</dbReference>
<dbReference type="HAMAP" id="MF_00407">
    <property type="entry name" value="DNA_ligase"/>
    <property type="match status" value="1"/>
</dbReference>
<dbReference type="InterPro" id="IPR050191">
    <property type="entry name" value="ATP-dep_DNA_ligase"/>
</dbReference>
<dbReference type="InterPro" id="IPR022865">
    <property type="entry name" value="DNA_ligae_ATP-dep_bac/arc"/>
</dbReference>
<dbReference type="InterPro" id="IPR000977">
    <property type="entry name" value="DNA_ligase_ATP-dep"/>
</dbReference>
<dbReference type="InterPro" id="IPR012309">
    <property type="entry name" value="DNA_ligase_ATP-dep_C"/>
</dbReference>
<dbReference type="InterPro" id="IPR012310">
    <property type="entry name" value="DNA_ligase_ATP-dep_cent"/>
</dbReference>
<dbReference type="InterPro" id="IPR016059">
    <property type="entry name" value="DNA_ligase_ATP-dep_CS"/>
</dbReference>
<dbReference type="InterPro" id="IPR012308">
    <property type="entry name" value="DNA_ligase_ATP-dep_N"/>
</dbReference>
<dbReference type="InterPro" id="IPR036599">
    <property type="entry name" value="DNA_ligase_N_sf"/>
</dbReference>
<dbReference type="InterPro" id="IPR012340">
    <property type="entry name" value="NA-bd_OB-fold"/>
</dbReference>
<dbReference type="NCBIfam" id="TIGR00574">
    <property type="entry name" value="dnl1"/>
    <property type="match status" value="1"/>
</dbReference>
<dbReference type="PANTHER" id="PTHR45674:SF4">
    <property type="entry name" value="DNA LIGASE 1"/>
    <property type="match status" value="1"/>
</dbReference>
<dbReference type="PANTHER" id="PTHR45674">
    <property type="entry name" value="DNA LIGASE 1/3 FAMILY MEMBER"/>
    <property type="match status" value="1"/>
</dbReference>
<dbReference type="Pfam" id="PF04679">
    <property type="entry name" value="DNA_ligase_A_C"/>
    <property type="match status" value="1"/>
</dbReference>
<dbReference type="Pfam" id="PF01068">
    <property type="entry name" value="DNA_ligase_A_M"/>
    <property type="match status" value="1"/>
</dbReference>
<dbReference type="Pfam" id="PF04675">
    <property type="entry name" value="DNA_ligase_A_N"/>
    <property type="match status" value="1"/>
</dbReference>
<dbReference type="SUPFAM" id="SSF117018">
    <property type="entry name" value="ATP-dependent DNA ligase DNA-binding domain"/>
    <property type="match status" value="1"/>
</dbReference>
<dbReference type="SUPFAM" id="SSF56091">
    <property type="entry name" value="DNA ligase/mRNA capping enzyme, catalytic domain"/>
    <property type="match status" value="1"/>
</dbReference>
<dbReference type="SUPFAM" id="SSF50249">
    <property type="entry name" value="Nucleic acid-binding proteins"/>
    <property type="match status" value="1"/>
</dbReference>
<dbReference type="PROSITE" id="PS00697">
    <property type="entry name" value="DNA_LIGASE_A1"/>
    <property type="match status" value="1"/>
</dbReference>
<dbReference type="PROSITE" id="PS00333">
    <property type="entry name" value="DNA_LIGASE_A2"/>
    <property type="match status" value="1"/>
</dbReference>
<dbReference type="PROSITE" id="PS50160">
    <property type="entry name" value="DNA_LIGASE_A3"/>
    <property type="match status" value="1"/>
</dbReference>
<sequence>MEFKVIAEYFDKLEKISSRLQLTALLADLLSKSDKAIIDKVVYIIQGKLWPDFLGYPELGIGEKFLIKAISIATNTDENSVENLYKSIGDLGEVARRLKSKQQSTGILGFLGTSSKESLKVDEVYSTLSKVALTTGEGSRDLKIRLLAGLLKKADPLEAKFLVRFVEGRLRVGIGDATVLDAMAIAFGGGQSASEIVERAYNLRADLGNIAKIIVEKGIEALKTLKPEVGIPIRPMLAERLSNPEEILKKVGGSALVDYKYDGERAQIHKKDDKIFIFSRRLENITSQYPDVVEYISKYTEGKEFIIEGEIVAVDPESGEMRSFQELMHRKRKSDIYEAIKEYPVNVFLFDLMYYEDVDYTTKPLEVRRKLLESIVKPNDYVKIAHHIQVNNVEDLKSFFYRAISEGGEGVMVKAIGKDAIYQAGARGWLWIKLKRDYQSEMADTVDLVVVGGFYGKGKRGGKISSLLMAAYNPKTDTFESVCKVASGFSDEQLDELQKKLMEIKRDIKHPRVNSKMEPDIWVEPVYVAEIIGAEITISPLHTCCQDVVEKDAGLSIRFPRFIRWRDDKSPEDATTTDEILEMYNKQPKKKIESPPIDESV</sequence>
<feature type="chain" id="PRO_1000205958" description="DNA ligase">
    <location>
        <begin position="1"/>
        <end position="601"/>
    </location>
</feature>
<feature type="region of interest" description="Disordered" evidence="2">
    <location>
        <begin position="568"/>
        <end position="601"/>
    </location>
</feature>
<feature type="active site" description="N6-AMP-lysine intermediate" evidence="1">
    <location>
        <position position="260"/>
    </location>
</feature>
<feature type="binding site" evidence="1">
    <location>
        <position position="258"/>
    </location>
    <ligand>
        <name>ATP</name>
        <dbReference type="ChEBI" id="CHEBI:30616"/>
    </ligand>
</feature>
<feature type="binding site" evidence="1">
    <location>
        <position position="265"/>
    </location>
    <ligand>
        <name>ATP</name>
        <dbReference type="ChEBI" id="CHEBI:30616"/>
    </ligand>
</feature>
<feature type="binding site" evidence="1">
    <location>
        <position position="280"/>
    </location>
    <ligand>
        <name>ATP</name>
        <dbReference type="ChEBI" id="CHEBI:30616"/>
    </ligand>
</feature>
<feature type="binding site" evidence="1">
    <location>
        <position position="310"/>
    </location>
    <ligand>
        <name>ATP</name>
        <dbReference type="ChEBI" id="CHEBI:30616"/>
    </ligand>
</feature>
<feature type="binding site" evidence="1">
    <location>
        <position position="350"/>
    </location>
    <ligand>
        <name>ATP</name>
        <dbReference type="ChEBI" id="CHEBI:30616"/>
    </ligand>
</feature>
<feature type="binding site" evidence="1">
    <location>
        <position position="427"/>
    </location>
    <ligand>
        <name>ATP</name>
        <dbReference type="ChEBI" id="CHEBI:30616"/>
    </ligand>
</feature>
<feature type="binding site" evidence="1">
    <location>
        <position position="433"/>
    </location>
    <ligand>
        <name>ATP</name>
        <dbReference type="ChEBI" id="CHEBI:30616"/>
    </ligand>
</feature>
<proteinExistence type="inferred from homology"/>
<accession>C3MYD2</accession>
<organism>
    <name type="scientific">Saccharolobus islandicus (strain M.14.25 / Kamchatka #1)</name>
    <name type="common">Sulfolobus islandicus</name>
    <dbReference type="NCBI Taxonomy" id="427317"/>
    <lineage>
        <taxon>Archaea</taxon>
        <taxon>Thermoproteota</taxon>
        <taxon>Thermoprotei</taxon>
        <taxon>Sulfolobales</taxon>
        <taxon>Sulfolobaceae</taxon>
        <taxon>Saccharolobus</taxon>
    </lineage>
</organism>
<protein>
    <recommendedName>
        <fullName evidence="1">DNA ligase</fullName>
        <ecNumber evidence="1">6.5.1.1</ecNumber>
    </recommendedName>
    <alternativeName>
        <fullName evidence="1">Polydeoxyribonucleotide synthase [ATP]</fullName>
    </alternativeName>
</protein>
<evidence type="ECO:0000255" key="1">
    <source>
        <dbReference type="HAMAP-Rule" id="MF_00407"/>
    </source>
</evidence>
<evidence type="ECO:0000256" key="2">
    <source>
        <dbReference type="SAM" id="MobiDB-lite"/>
    </source>
</evidence>
<gene>
    <name evidence="1" type="primary">lig</name>
    <name type="ordered locus">M1425_1945</name>
</gene>
<keyword id="KW-0067">ATP-binding</keyword>
<keyword id="KW-0131">Cell cycle</keyword>
<keyword id="KW-0132">Cell division</keyword>
<keyword id="KW-0227">DNA damage</keyword>
<keyword id="KW-0233">DNA recombination</keyword>
<keyword id="KW-0234">DNA repair</keyword>
<keyword id="KW-0235">DNA replication</keyword>
<keyword id="KW-0436">Ligase</keyword>
<keyword id="KW-0460">Magnesium</keyword>
<keyword id="KW-0479">Metal-binding</keyword>
<keyword id="KW-0547">Nucleotide-binding</keyword>
<comment type="function">
    <text evidence="1">DNA ligase that seals nicks in double-stranded DNA during DNA replication, DNA recombination and DNA repair.</text>
</comment>
<comment type="catalytic activity">
    <reaction evidence="1">
        <text>ATP + (deoxyribonucleotide)n-3'-hydroxyl + 5'-phospho-(deoxyribonucleotide)m = (deoxyribonucleotide)n+m + AMP + diphosphate.</text>
        <dbReference type="EC" id="6.5.1.1"/>
    </reaction>
</comment>
<comment type="cofactor">
    <cofactor evidence="1">
        <name>Mg(2+)</name>
        <dbReference type="ChEBI" id="CHEBI:18420"/>
    </cofactor>
</comment>
<comment type="similarity">
    <text evidence="1">Belongs to the ATP-dependent DNA ligase family.</text>
</comment>